<protein>
    <recommendedName>
        <fullName evidence="7">Voltage-dependent calcium channel beta subunit-associated regulatory protein</fullName>
    </recommendedName>
    <alternativeName>
        <fullName evidence="6">Downstream of Stk11 protein</fullName>
    </alternativeName>
</protein>
<accession>Q66L44</accession>
<accession>E9QP85</accession>
<accession>Q497H6</accession>
<accession>Q8CBL1</accession>
<accession>Q9QZY3</accession>
<gene>
    <name evidence="9" type="primary">Cbarp</name>
    <name evidence="6" type="synonym">Barp</name>
    <name evidence="6" type="synonym">Dos</name>
    <name evidence="5" type="synonym">R29144/1</name>
</gene>
<dbReference type="EMBL" id="AC159999">
    <property type="status" value="NOT_ANNOTATED_CDS"/>
    <property type="molecule type" value="Genomic_DNA"/>
</dbReference>
<dbReference type="EMBL" id="BC078442">
    <property type="protein sequence ID" value="AAH78442.1"/>
    <property type="molecule type" value="mRNA"/>
</dbReference>
<dbReference type="EMBL" id="BC100552">
    <property type="protein sequence ID" value="AAI00553.1"/>
    <property type="status" value="ALT_SEQ"/>
    <property type="molecule type" value="mRNA"/>
</dbReference>
<dbReference type="EMBL" id="AK035824">
    <property type="protein sequence ID" value="BAC29200.1"/>
    <property type="molecule type" value="mRNA"/>
</dbReference>
<dbReference type="EMBL" id="AF145697">
    <property type="protein sequence ID" value="AAD55370.1"/>
    <property type="molecule type" value="Genomic_DNA"/>
</dbReference>
<dbReference type="CCDS" id="CCDS56734.1"/>
<dbReference type="RefSeq" id="NP_001182197.1">
    <property type="nucleotide sequence ID" value="NM_001195268.2"/>
</dbReference>
<dbReference type="RefSeq" id="XP_006513028.2">
    <property type="nucleotide sequence ID" value="XM_006512965.3"/>
</dbReference>
<dbReference type="RefSeq" id="XP_006513032.1">
    <property type="nucleotide sequence ID" value="XM_006512969.3"/>
</dbReference>
<dbReference type="RefSeq" id="XP_006513037.1">
    <property type="nucleotide sequence ID" value="XM_006512974.2"/>
</dbReference>
<dbReference type="RefSeq" id="XP_006513039.1">
    <property type="nucleotide sequence ID" value="XM_006512976.2"/>
</dbReference>
<dbReference type="RefSeq" id="XP_006513040.1">
    <property type="nucleotide sequence ID" value="XM_006512977.2"/>
</dbReference>
<dbReference type="RefSeq" id="XP_006513041.1">
    <property type="nucleotide sequence ID" value="XM_006512978.2"/>
</dbReference>
<dbReference type="SMR" id="Q66L44"/>
<dbReference type="BioGRID" id="424938">
    <property type="interactions" value="4"/>
</dbReference>
<dbReference type="FunCoup" id="Q66L44">
    <property type="interactions" value="529"/>
</dbReference>
<dbReference type="STRING" id="10090.ENSMUSP00000101008"/>
<dbReference type="GlyCosmos" id="Q66L44">
    <property type="glycosylation" value="1 site, No reported glycans"/>
</dbReference>
<dbReference type="GlyGen" id="Q66L44">
    <property type="glycosylation" value="2 sites"/>
</dbReference>
<dbReference type="iPTMnet" id="Q66L44"/>
<dbReference type="PhosphoSitePlus" id="Q66L44"/>
<dbReference type="jPOST" id="Q66L44"/>
<dbReference type="PaxDb" id="10090-ENSMUSP00000132978"/>
<dbReference type="ProteomicsDB" id="265559"/>
<dbReference type="Antibodypedia" id="2282">
    <property type="antibodies" value="61 antibodies from 17 providers"/>
</dbReference>
<dbReference type="Ensembl" id="ENSMUST00000105369.8">
    <property type="protein sequence ID" value="ENSMUSP00000101008.2"/>
    <property type="gene ID" value="ENSMUSG00000035640.20"/>
</dbReference>
<dbReference type="Ensembl" id="ENSMUST00000170219.9">
    <property type="protein sequence ID" value="ENSMUSP00000131487.3"/>
    <property type="gene ID" value="ENSMUSG00000035640.20"/>
</dbReference>
<dbReference type="GeneID" id="100503659"/>
<dbReference type="KEGG" id="mmu:100503659"/>
<dbReference type="UCSC" id="uc007gbw.1">
    <property type="organism name" value="mouse"/>
</dbReference>
<dbReference type="UCSC" id="uc011xim.1">
    <property type="organism name" value="mouse"/>
</dbReference>
<dbReference type="AGR" id="MGI:1354170"/>
<dbReference type="CTD" id="255057"/>
<dbReference type="MGI" id="MGI:1354170">
    <property type="gene designation" value="Cbarp"/>
</dbReference>
<dbReference type="VEuPathDB" id="HostDB:ENSMUSG00000035640"/>
<dbReference type="eggNOG" id="ENOG502QQ2E">
    <property type="taxonomic scope" value="Eukaryota"/>
</dbReference>
<dbReference type="GeneTree" id="ENSGT00390000009230"/>
<dbReference type="InParanoid" id="Q66L44"/>
<dbReference type="OMA" id="PGVRHFH"/>
<dbReference type="BioGRID-ORCS" id="100503659">
    <property type="hits" value="1 hit in 43 CRISPR screens"/>
</dbReference>
<dbReference type="ChiTaRS" id="Cbarp">
    <property type="organism name" value="mouse"/>
</dbReference>
<dbReference type="PRO" id="PR:Q66L44"/>
<dbReference type="Proteomes" id="UP000000589">
    <property type="component" value="Chromosome 10"/>
</dbReference>
<dbReference type="RNAct" id="Q66L44">
    <property type="molecule type" value="protein"/>
</dbReference>
<dbReference type="Bgee" id="ENSMUSG00000035640">
    <property type="expression patterns" value="Expressed in suprachiasmatic nucleus and 227 other cell types or tissues"/>
</dbReference>
<dbReference type="ExpressionAtlas" id="Q66L44">
    <property type="expression patterns" value="baseline and differential"/>
</dbReference>
<dbReference type="GO" id="GO:0030426">
    <property type="term" value="C:growth cone"/>
    <property type="evidence" value="ECO:0007669"/>
    <property type="project" value="UniProtKB-SubCell"/>
</dbReference>
<dbReference type="GO" id="GO:0005886">
    <property type="term" value="C:plasma membrane"/>
    <property type="evidence" value="ECO:0000314"/>
    <property type="project" value="UniProtKB"/>
</dbReference>
<dbReference type="GO" id="GO:0030141">
    <property type="term" value="C:secretory granule"/>
    <property type="evidence" value="ECO:0000314"/>
    <property type="project" value="UniProtKB"/>
</dbReference>
<dbReference type="GO" id="GO:0030672">
    <property type="term" value="C:synaptic vesicle membrane"/>
    <property type="evidence" value="ECO:0007669"/>
    <property type="project" value="UniProtKB-SubCell"/>
</dbReference>
<dbReference type="GO" id="GO:0044325">
    <property type="term" value="F:transmembrane transporter binding"/>
    <property type="evidence" value="ECO:0000314"/>
    <property type="project" value="UniProtKB"/>
</dbReference>
<dbReference type="GO" id="GO:1903170">
    <property type="term" value="P:negative regulation of calcium ion transmembrane transport"/>
    <property type="evidence" value="ECO:0000315"/>
    <property type="project" value="UniProtKB"/>
</dbReference>
<dbReference type="GO" id="GO:0045955">
    <property type="term" value="P:negative regulation of calcium ion-dependent exocytosis"/>
    <property type="evidence" value="ECO:0000315"/>
    <property type="project" value="UniProtKB"/>
</dbReference>
<dbReference type="GO" id="GO:1901386">
    <property type="term" value="P:negative regulation of voltage-gated calcium channel activity"/>
    <property type="evidence" value="ECO:0000315"/>
    <property type="project" value="UniProtKB"/>
</dbReference>
<dbReference type="InterPro" id="IPR037658">
    <property type="entry name" value="CBARP"/>
</dbReference>
<dbReference type="PANTHER" id="PTHR28597">
    <property type="entry name" value="VOLTAGE-DEPENDENT CALCIUM CHANNEL BETA SUBUNIT-ASSOCIATED REGULATORY PROTEIN"/>
    <property type="match status" value="1"/>
</dbReference>
<dbReference type="PANTHER" id="PTHR28597:SF1">
    <property type="entry name" value="VOLTAGE-DEPENDENT CALCIUM CHANNEL BETA SUBUNIT-ASSOCIATED REGULATORY PROTEIN"/>
    <property type="match status" value="1"/>
</dbReference>
<evidence type="ECO:0000250" key="1">
    <source>
        <dbReference type="UniProtKB" id="Q8N350"/>
    </source>
</evidence>
<evidence type="ECO:0000255" key="2"/>
<evidence type="ECO:0000256" key="3">
    <source>
        <dbReference type="SAM" id="MobiDB-lite"/>
    </source>
</evidence>
<evidence type="ECO:0000269" key="4">
    <source>
    </source>
</evidence>
<evidence type="ECO:0000303" key="5">
    <source>
    </source>
</evidence>
<evidence type="ECO:0000303" key="6">
    <source>
    </source>
</evidence>
<evidence type="ECO:0000305" key="7"/>
<evidence type="ECO:0000305" key="8">
    <source>
    </source>
</evidence>
<evidence type="ECO:0000312" key="9">
    <source>
        <dbReference type="MGI" id="MGI:1354170"/>
    </source>
</evidence>
<evidence type="ECO:0007744" key="10">
    <source>
    </source>
</evidence>
<keyword id="KW-1003">Cell membrane</keyword>
<keyword id="KW-0966">Cell projection</keyword>
<keyword id="KW-0968">Cytoplasmic vesicle</keyword>
<keyword id="KW-0325">Glycoprotein</keyword>
<keyword id="KW-0472">Membrane</keyword>
<keyword id="KW-0597">Phosphoprotein</keyword>
<keyword id="KW-1185">Reference proteome</keyword>
<keyword id="KW-0770">Synapse</keyword>
<keyword id="KW-0812">Transmembrane</keyword>
<keyword id="KW-1133">Transmembrane helix</keyword>
<organism>
    <name type="scientific">Mus musculus</name>
    <name type="common">Mouse</name>
    <dbReference type="NCBI Taxonomy" id="10090"/>
    <lineage>
        <taxon>Eukaryota</taxon>
        <taxon>Metazoa</taxon>
        <taxon>Chordata</taxon>
        <taxon>Craniata</taxon>
        <taxon>Vertebrata</taxon>
        <taxon>Euteleostomi</taxon>
        <taxon>Mammalia</taxon>
        <taxon>Eutheria</taxon>
        <taxon>Euarchontoglires</taxon>
        <taxon>Glires</taxon>
        <taxon>Rodentia</taxon>
        <taxon>Myomorpha</taxon>
        <taxon>Muroidea</taxon>
        <taxon>Muridae</taxon>
        <taxon>Murinae</taxon>
        <taxon>Mus</taxon>
        <taxon>Mus</taxon>
    </lineage>
</organism>
<feature type="chain" id="PRO_0000079984" description="Voltage-dependent calcium channel beta subunit-associated regulatory protein">
    <location>
        <begin position="1"/>
        <end position="698"/>
    </location>
</feature>
<feature type="topological domain" description="Extracellular" evidence="4">
    <location>
        <begin position="1"/>
        <end position="41"/>
    </location>
</feature>
<feature type="transmembrane region" description="Helical; Signal-anchor for type III membrane protein" evidence="2">
    <location>
        <begin position="42"/>
        <end position="62"/>
    </location>
</feature>
<feature type="topological domain" description="Cytoplasmic" evidence="4">
    <location>
        <begin position="63"/>
        <end position="698"/>
    </location>
</feature>
<feature type="region of interest" description="Disordered" evidence="3">
    <location>
        <begin position="90"/>
        <end position="124"/>
    </location>
</feature>
<feature type="region of interest" description="Disordered" evidence="3">
    <location>
        <begin position="185"/>
        <end position="275"/>
    </location>
</feature>
<feature type="region of interest" description="Disordered" evidence="3">
    <location>
        <begin position="308"/>
        <end position="339"/>
    </location>
</feature>
<feature type="region of interest" description="Disordered" evidence="3">
    <location>
        <begin position="360"/>
        <end position="421"/>
    </location>
</feature>
<feature type="region of interest" description="Disordered" evidence="3">
    <location>
        <begin position="438"/>
        <end position="536"/>
    </location>
</feature>
<feature type="region of interest" description="Disordered" evidence="3">
    <location>
        <begin position="554"/>
        <end position="648"/>
    </location>
</feature>
<feature type="compositionally biased region" description="Low complexity" evidence="3">
    <location>
        <begin position="185"/>
        <end position="197"/>
    </location>
</feature>
<feature type="compositionally biased region" description="Pro residues" evidence="3">
    <location>
        <begin position="360"/>
        <end position="375"/>
    </location>
</feature>
<feature type="compositionally biased region" description="Low complexity" evidence="3">
    <location>
        <begin position="402"/>
        <end position="413"/>
    </location>
</feature>
<feature type="compositionally biased region" description="Gly residues" evidence="3">
    <location>
        <begin position="459"/>
        <end position="468"/>
    </location>
</feature>
<feature type="compositionally biased region" description="Pro residues" evidence="3">
    <location>
        <begin position="471"/>
        <end position="482"/>
    </location>
</feature>
<feature type="compositionally biased region" description="Basic and acidic residues" evidence="3">
    <location>
        <begin position="483"/>
        <end position="493"/>
    </location>
</feature>
<feature type="compositionally biased region" description="Basic residues" evidence="3">
    <location>
        <begin position="562"/>
        <end position="576"/>
    </location>
</feature>
<feature type="modified residue" description="Phosphoserine" evidence="10">
    <location>
        <position position="290"/>
    </location>
</feature>
<feature type="modified residue" description="Phosphoserine" evidence="10">
    <location>
        <position position="295"/>
    </location>
</feature>
<feature type="modified residue" description="Phosphoserine" evidence="10">
    <location>
        <position position="501"/>
    </location>
</feature>
<feature type="modified residue" description="Phosphoserine" evidence="10">
    <location>
        <position position="520"/>
    </location>
</feature>
<feature type="modified residue" description="Phosphoserine" evidence="10">
    <location>
        <position position="524"/>
    </location>
</feature>
<feature type="modified residue" description="Phosphoserine" evidence="10">
    <location>
        <position position="610"/>
    </location>
</feature>
<feature type="modified residue" description="Phosphothreonine" evidence="1">
    <location>
        <position position="691"/>
    </location>
</feature>
<feature type="modified residue" description="Phosphoserine" evidence="1">
    <location>
        <position position="692"/>
    </location>
</feature>
<feature type="modified residue" description="Phosphoserine" evidence="1">
    <location>
        <position position="696"/>
    </location>
</feature>
<feature type="glycosylation site" description="N-linked (GlcNAc...) asparagine" evidence="4">
    <location>
        <position position="25"/>
    </location>
</feature>
<feature type="mutagenesis site" description="Loss of N-glycosylation." evidence="4">
    <original>N</original>
    <variation>Q</variation>
    <location>
        <position position="25"/>
    </location>
</feature>
<feature type="mutagenesis site" description="Loss of interaction with CACNB3 and loss of the ability to negatively regulate voltage-dependent L-type calcium channel; when associated with 545-A--A-550." evidence="4">
    <original>LW</original>
    <variation>AA</variation>
    <location>
        <begin position="426"/>
        <end position="427"/>
    </location>
</feature>
<feature type="mutagenesis site" description="Loss of interaction with CACNB3 and loss of the ability to negatively regulate voltage-dependent L-type calcium channel; when associated with 426-A-A-427." evidence="4">
    <original>LFHEFL</original>
    <variation>AAHEAA</variation>
    <location>
        <begin position="545"/>
        <end position="550"/>
    </location>
</feature>
<feature type="sequence conflict" description="In Ref. 3; BAC29200." evidence="7" ref="3">
    <original>H</original>
    <variation>Y</variation>
    <location>
        <position position="555"/>
    </location>
</feature>
<feature type="sequence conflict" description="In Ref. 3; BAC29200." evidence="7" ref="3">
    <original>E</original>
    <variation>K</variation>
    <location>
        <position position="634"/>
    </location>
</feature>
<feature type="sequence conflict" description="In Ref. 3; BAC29200." evidence="7" ref="3">
    <original>G</original>
    <variation>A</variation>
    <location>
        <position position="637"/>
    </location>
</feature>
<sequence length="698" mass="74131">MQPTATMATAAATTATVALTTSWDNATSRPTAEPDPILDNYVLLVVVMSLFVGGTLVVLSGVLLLCKRCWEVHQRFNRAMEEAEKTTTTYLDNGTHPIQDPDCRGEDPEGQDTETERFLATSSTGRRVSFNEAALFEQSRKAQDKGRRYTLTEGDFHHLKNARLTHLHLPPLKIATIHECDSGEASAAATPHPATTSKDSLAIFQPPGKTLTGHSVGPSSALPGGPYNSVDFSEISPSTSSDSGEGISLDAGTRGAKAAGPETVPGEMGTGSSGSGTVLQFFTRLRRHASLDGASPYFKVKKWKLEPSQRASSLDTRGSPKRHHFQRQRAASESMEQEGDVPHADFIQYIASAGDSVAFPPPRPFLASPTSPPPTLGRLEAAEAAGGASPETPPEHGISLGPEHAQQQDPQQEQDAEHAQCSYRDLWSLRASLELHAATASDHSSSGNDRDSVRSGDSSGSGSGGGGAAPAFPPPPESPPALRPKDGEARRLLQMDSGYASIEGRGAGDEVSELPAPARSPPRSPRAWPRRPRRDYSIDEKTDALFHEFLRHDPHFDDAPRHRTRAHPHTHARKQWQQRGRQHSDPGGARAATPPGVARPTRAPLRRGDSVDCPPEGRALPITGDDPSIPVIEEEPGGGGGGCPGSGLCVEPAGALLDKLAASLDERLFSPRLAEPVASSQVLIVAAAAPTSPDHSPA</sequence>
<proteinExistence type="evidence at protein level"/>
<name>CBARP_MOUSE</name>
<reference key="1">
    <citation type="journal article" date="2009" name="PLoS Biol.">
        <title>Lineage-specific biology revealed by a finished genome assembly of the mouse.</title>
        <authorList>
            <person name="Church D.M."/>
            <person name="Goodstadt L."/>
            <person name="Hillier L.W."/>
            <person name="Zody M.C."/>
            <person name="Goldstein S."/>
            <person name="She X."/>
            <person name="Bult C.J."/>
            <person name="Agarwala R."/>
            <person name="Cherry J.L."/>
            <person name="DiCuccio M."/>
            <person name="Hlavina W."/>
            <person name="Kapustin Y."/>
            <person name="Meric P."/>
            <person name="Maglott D."/>
            <person name="Birtle Z."/>
            <person name="Marques A.C."/>
            <person name="Graves T."/>
            <person name="Zhou S."/>
            <person name="Teague B."/>
            <person name="Potamousis K."/>
            <person name="Churas C."/>
            <person name="Place M."/>
            <person name="Herschleb J."/>
            <person name="Runnheim R."/>
            <person name="Forrest D."/>
            <person name="Amos-Landgraf J."/>
            <person name="Schwartz D.C."/>
            <person name="Cheng Z."/>
            <person name="Lindblad-Toh K."/>
            <person name="Eichler E.E."/>
            <person name="Ponting C.P."/>
        </authorList>
    </citation>
    <scope>NUCLEOTIDE SEQUENCE [LARGE SCALE GENOMIC DNA]</scope>
    <source>
        <strain>C57BL/6J</strain>
    </source>
</reference>
<reference key="2">
    <citation type="journal article" date="2004" name="Genome Res.">
        <title>The status, quality, and expansion of the NIH full-length cDNA project: the Mammalian Gene Collection (MGC).</title>
        <authorList>
            <consortium name="The MGC Project Team"/>
        </authorList>
    </citation>
    <scope>NUCLEOTIDE SEQUENCE [LARGE SCALE MRNA] OF 147-698</scope>
    <source>
        <strain>C57BL/6J</strain>
        <tissue>Brain</tissue>
    </source>
</reference>
<reference key="3">
    <citation type="journal article" date="2005" name="Science">
        <title>The transcriptional landscape of the mammalian genome.</title>
        <authorList>
            <person name="Carninci P."/>
            <person name="Kasukawa T."/>
            <person name="Katayama S."/>
            <person name="Gough J."/>
            <person name="Frith M.C."/>
            <person name="Maeda N."/>
            <person name="Oyama R."/>
            <person name="Ravasi T."/>
            <person name="Lenhard B."/>
            <person name="Wells C."/>
            <person name="Kodzius R."/>
            <person name="Shimokawa K."/>
            <person name="Bajic V.B."/>
            <person name="Brenner S.E."/>
            <person name="Batalov S."/>
            <person name="Forrest A.R."/>
            <person name="Zavolan M."/>
            <person name="Davis M.J."/>
            <person name="Wilming L.G."/>
            <person name="Aidinis V."/>
            <person name="Allen J.E."/>
            <person name="Ambesi-Impiombato A."/>
            <person name="Apweiler R."/>
            <person name="Aturaliya R.N."/>
            <person name="Bailey T.L."/>
            <person name="Bansal M."/>
            <person name="Baxter L."/>
            <person name="Beisel K.W."/>
            <person name="Bersano T."/>
            <person name="Bono H."/>
            <person name="Chalk A.M."/>
            <person name="Chiu K.P."/>
            <person name="Choudhary V."/>
            <person name="Christoffels A."/>
            <person name="Clutterbuck D.R."/>
            <person name="Crowe M.L."/>
            <person name="Dalla E."/>
            <person name="Dalrymple B.P."/>
            <person name="de Bono B."/>
            <person name="Della Gatta G."/>
            <person name="di Bernardo D."/>
            <person name="Down T."/>
            <person name="Engstrom P."/>
            <person name="Fagiolini M."/>
            <person name="Faulkner G."/>
            <person name="Fletcher C.F."/>
            <person name="Fukushima T."/>
            <person name="Furuno M."/>
            <person name="Futaki S."/>
            <person name="Gariboldi M."/>
            <person name="Georgii-Hemming P."/>
            <person name="Gingeras T.R."/>
            <person name="Gojobori T."/>
            <person name="Green R.E."/>
            <person name="Gustincich S."/>
            <person name="Harbers M."/>
            <person name="Hayashi Y."/>
            <person name="Hensch T.K."/>
            <person name="Hirokawa N."/>
            <person name="Hill D."/>
            <person name="Huminiecki L."/>
            <person name="Iacono M."/>
            <person name="Ikeo K."/>
            <person name="Iwama A."/>
            <person name="Ishikawa T."/>
            <person name="Jakt M."/>
            <person name="Kanapin A."/>
            <person name="Katoh M."/>
            <person name="Kawasawa Y."/>
            <person name="Kelso J."/>
            <person name="Kitamura H."/>
            <person name="Kitano H."/>
            <person name="Kollias G."/>
            <person name="Krishnan S.P."/>
            <person name="Kruger A."/>
            <person name="Kummerfeld S.K."/>
            <person name="Kurochkin I.V."/>
            <person name="Lareau L.F."/>
            <person name="Lazarevic D."/>
            <person name="Lipovich L."/>
            <person name="Liu J."/>
            <person name="Liuni S."/>
            <person name="McWilliam S."/>
            <person name="Madan Babu M."/>
            <person name="Madera M."/>
            <person name="Marchionni L."/>
            <person name="Matsuda H."/>
            <person name="Matsuzawa S."/>
            <person name="Miki H."/>
            <person name="Mignone F."/>
            <person name="Miyake S."/>
            <person name="Morris K."/>
            <person name="Mottagui-Tabar S."/>
            <person name="Mulder N."/>
            <person name="Nakano N."/>
            <person name="Nakauchi H."/>
            <person name="Ng P."/>
            <person name="Nilsson R."/>
            <person name="Nishiguchi S."/>
            <person name="Nishikawa S."/>
            <person name="Nori F."/>
            <person name="Ohara O."/>
            <person name="Okazaki Y."/>
            <person name="Orlando V."/>
            <person name="Pang K.C."/>
            <person name="Pavan W.J."/>
            <person name="Pavesi G."/>
            <person name="Pesole G."/>
            <person name="Petrovsky N."/>
            <person name="Piazza S."/>
            <person name="Reed J."/>
            <person name="Reid J.F."/>
            <person name="Ring B.Z."/>
            <person name="Ringwald M."/>
            <person name="Rost B."/>
            <person name="Ruan Y."/>
            <person name="Salzberg S.L."/>
            <person name="Sandelin A."/>
            <person name="Schneider C."/>
            <person name="Schoenbach C."/>
            <person name="Sekiguchi K."/>
            <person name="Semple C.A."/>
            <person name="Seno S."/>
            <person name="Sessa L."/>
            <person name="Sheng Y."/>
            <person name="Shibata Y."/>
            <person name="Shimada H."/>
            <person name="Shimada K."/>
            <person name="Silva D."/>
            <person name="Sinclair B."/>
            <person name="Sperling S."/>
            <person name="Stupka E."/>
            <person name="Sugiura K."/>
            <person name="Sultana R."/>
            <person name="Takenaka Y."/>
            <person name="Taki K."/>
            <person name="Tammoja K."/>
            <person name="Tan S.L."/>
            <person name="Tang S."/>
            <person name="Taylor M.S."/>
            <person name="Tegner J."/>
            <person name="Teichmann S.A."/>
            <person name="Ueda H.R."/>
            <person name="van Nimwegen E."/>
            <person name="Verardo R."/>
            <person name="Wei C.L."/>
            <person name="Yagi K."/>
            <person name="Yamanishi H."/>
            <person name="Zabarovsky E."/>
            <person name="Zhu S."/>
            <person name="Zimmer A."/>
            <person name="Hide W."/>
            <person name="Bult C."/>
            <person name="Grimmond S.M."/>
            <person name="Teasdale R.D."/>
            <person name="Liu E.T."/>
            <person name="Brusic V."/>
            <person name="Quackenbush J."/>
            <person name="Wahlestedt C."/>
            <person name="Mattick J.S."/>
            <person name="Hume D.A."/>
            <person name="Kai C."/>
            <person name="Sasaki D."/>
            <person name="Tomaru Y."/>
            <person name="Fukuda S."/>
            <person name="Kanamori-Katayama M."/>
            <person name="Suzuki M."/>
            <person name="Aoki J."/>
            <person name="Arakawa T."/>
            <person name="Iida J."/>
            <person name="Imamura K."/>
            <person name="Itoh M."/>
            <person name="Kato T."/>
            <person name="Kawaji H."/>
            <person name="Kawagashira N."/>
            <person name="Kawashima T."/>
            <person name="Kojima M."/>
            <person name="Kondo S."/>
            <person name="Konno H."/>
            <person name="Nakano K."/>
            <person name="Ninomiya N."/>
            <person name="Nishio T."/>
            <person name="Okada M."/>
            <person name="Plessy C."/>
            <person name="Shibata K."/>
            <person name="Shiraki T."/>
            <person name="Suzuki S."/>
            <person name="Tagami M."/>
            <person name="Waki K."/>
            <person name="Watahiki A."/>
            <person name="Okamura-Oho Y."/>
            <person name="Suzuki H."/>
            <person name="Kawai J."/>
            <person name="Hayashizaki Y."/>
        </authorList>
    </citation>
    <scope>NUCLEOTIDE SEQUENCE [LARGE SCALE MRNA] OF 250-698</scope>
    <source>
        <strain>C57BL/6J</strain>
        <tissue>Cerebellum</tissue>
    </source>
</reference>
<reference key="4">
    <citation type="journal article" date="1999" name="Hum. Mol. Genet.">
        <title>The mouse Peutz-Jeghers syndrome gene Lkb1 encodes a nuclear protein kinase.</title>
        <authorList>
            <person name="Smith D.P."/>
            <person name="Spicer J."/>
            <person name="Smith A."/>
            <person name="Swift S."/>
            <person name="Ashworth A."/>
        </authorList>
    </citation>
    <scope>NUCLEOTIDE SEQUENCE [GENOMIC DNA] OF 683-698</scope>
    <source>
        <strain>129</strain>
    </source>
</reference>
<reference key="5">
    <citation type="journal article" date="2007" name="Mol. Cell. Proteomics">
        <title>Qualitative and quantitative analyses of protein phosphorylation in naive and stimulated mouse synaptosomal preparations.</title>
        <authorList>
            <person name="Munton R.P."/>
            <person name="Tweedie-Cullen R."/>
            <person name="Livingstone-Zatchej M."/>
            <person name="Weinandy F."/>
            <person name="Waidelich M."/>
            <person name="Longo D."/>
            <person name="Gehrig P."/>
            <person name="Potthast F."/>
            <person name="Rutishauser D."/>
            <person name="Gerrits B."/>
            <person name="Panse C."/>
            <person name="Schlapbach R."/>
            <person name="Mansuy I.M."/>
        </authorList>
    </citation>
    <scope>IDENTIFICATION BY MASS SPECTROMETRY [LARGE SCALE ANALYSIS]</scope>
    <source>
        <tissue>Brain cortex</tissue>
    </source>
</reference>
<reference key="6">
    <citation type="journal article" date="2010" name="Cell">
        <title>A tissue-specific atlas of mouse protein phosphorylation and expression.</title>
        <authorList>
            <person name="Huttlin E.L."/>
            <person name="Jedrychowski M.P."/>
            <person name="Elias J.E."/>
            <person name="Goswami T."/>
            <person name="Rad R."/>
            <person name="Beausoleil S.A."/>
            <person name="Villen J."/>
            <person name="Haas W."/>
            <person name="Sowa M.E."/>
            <person name="Gygi S.P."/>
        </authorList>
    </citation>
    <scope>PHOSPHORYLATION [LARGE SCALE ANALYSIS] AT SER-290; SER-295; SER-501; SER-520; SER-524 AND SER-610</scope>
    <scope>IDENTIFICATION BY MASS SPECTROMETRY [LARGE SCALE ANALYSIS]</scope>
    <source>
        <tissue>Brain</tissue>
        <tissue>Kidney</tissue>
    </source>
</reference>
<reference key="7">
    <citation type="journal article" date="2014" name="J. Cell Biol.">
        <title>BARP suppresses voltage-gated calcium channel activity and Ca2+-evoked exocytosis.</title>
        <authorList>
            <person name="Beguin P."/>
            <person name="Nagashima K."/>
            <person name="Mahalakshmi R.N."/>
            <person name="Vigot R."/>
            <person name="Matsunaga A."/>
            <person name="Miki T."/>
            <person name="Ng M.Y."/>
            <person name="Ng Y.J."/>
            <person name="Lim C.H."/>
            <person name="Tay H.S."/>
            <person name="Hwang L.A."/>
            <person name="Firsov D."/>
            <person name="Tang B.L."/>
            <person name="Inagaki N."/>
            <person name="Mori Y."/>
            <person name="Seino S."/>
            <person name="Launey T."/>
            <person name="Hunziker W."/>
        </authorList>
    </citation>
    <scope>FUNCTION</scope>
    <scope>INTERACTION WITH CACNB1; CACNB2; CACNB3 AND CACNB4</scope>
    <scope>SUBCELLULAR LOCATION</scope>
    <scope>TOPOLOGY</scope>
    <scope>TISSUE SPECIFICITY</scope>
    <scope>DEVELOPMENTAL STAGE</scope>
    <scope>GLYCOSYLATION AT ASN-25</scope>
    <scope>MUTAGENESIS OF ASN-25; 426-LEU-TRP-427 AND 545-LEU--LEU-550</scope>
</reference>
<comment type="function">
    <text evidence="4">Negatively regulates voltage-gated calcium channels by preventing the interaction between their alpha and beta subunits. Thereby, negatively regulates calcium channels activity at the plasma membrane and indirectly inhibits calcium-regulated exocytosis.</text>
</comment>
<comment type="subunit">
    <text evidence="4">Interacts with voltage-dependent calcium channels CACNB1, CACNB2, CACNB3 and CACNB4 beta subunits; prevents their interaction with the CACNA1C alpha subunit thereby negatively regulating the activity of the corresponding calcium channels.</text>
</comment>
<comment type="subcellular location">
    <subcellularLocation>
        <location evidence="4">Cytoplasmic vesicle</location>
        <location evidence="4">Secretory vesicle</location>
        <location evidence="4">Synaptic vesicle membrane</location>
        <topology evidence="8">Single-pass type III membrane protein</topology>
    </subcellularLocation>
    <subcellularLocation>
        <location evidence="4">Cell membrane</location>
        <topology evidence="8">Single-pass type III membrane protein</topology>
    </subcellularLocation>
    <subcellularLocation>
        <location evidence="4">Cell projection</location>
        <location evidence="4">Growth cone</location>
    </subcellularLocation>
</comment>
<comment type="tissue specificity">
    <text evidence="4">Expressed by neurons in the cortex, cerebellum and hippocampus and by pancreatic beta cells (at protein level).</text>
</comment>
<comment type="developmental stage">
    <text evidence="4">Detected in brain from 14 dpc until adulthood with higher expression between 18 dpc and P7 (at protein level).</text>
</comment>
<comment type="sequence caution" evidence="7">
    <conflict type="miscellaneous discrepancy">
        <sequence resource="EMBL-CDS" id="AAI00553"/>
    </conflict>
    <text>Probable cloning artifact.</text>
</comment>